<evidence type="ECO:0000255" key="1">
    <source>
        <dbReference type="HAMAP-Rule" id="MF_00087"/>
    </source>
</evidence>
<organism>
    <name type="scientific">Bordetella bronchiseptica (strain ATCC BAA-588 / NCTC 13252 / RB50)</name>
    <name type="common">Alcaligenes bronchisepticus</name>
    <dbReference type="NCBI Taxonomy" id="257310"/>
    <lineage>
        <taxon>Bacteria</taxon>
        <taxon>Pseudomonadati</taxon>
        <taxon>Pseudomonadota</taxon>
        <taxon>Betaproteobacteria</taxon>
        <taxon>Burkholderiales</taxon>
        <taxon>Alcaligenaceae</taxon>
        <taxon>Bordetella</taxon>
    </lineage>
</organism>
<sequence>MSVAVLAFGLNHTSAPVSVRERVSMPVDLVKPALEGLRATFGGAVREAAILSTCNRTELYCAAEGQVAEHLPAWLAEHNRLEAAALRPHLYRHQHDDAVRHAFRVASGLDSMVLGEPQILGQMKDAVRAANEAGALGTLLHQLFQRTFSVAKEVRSQTAIGAHSVSMAAAAVRLAERVFGQLEDARTLFIGAGEMIELCATHFAAQRPRSMVVANRTIERAETLAGRFSAQTMKLADLTERLAEFDVIVSCTASSLPILGLGMVERATRQRRHRPMVMIDLAVPRDIEPEVGRLDDVYLYSVDDLGRLVQSGTDARRAAVVQAEAIIETRVQGFMHWMQSREVVPVIRDLHQAADDVRAAELERARRMLARGESPEAVLEQLAHGLTQKYLHGPLAALNRSEGDERRQLLAWVPRLFPGRDSRR</sequence>
<dbReference type="EC" id="1.2.1.70" evidence="1"/>
<dbReference type="EMBL" id="BX640438">
    <property type="protein sequence ID" value="CAE30881.1"/>
    <property type="molecule type" value="Genomic_DNA"/>
</dbReference>
<dbReference type="RefSeq" id="WP_003807616.1">
    <property type="nucleotide sequence ID" value="NC_002927.3"/>
</dbReference>
<dbReference type="SMR" id="Q7WQF0"/>
<dbReference type="GeneID" id="93206615"/>
<dbReference type="KEGG" id="bbr:BB0383"/>
<dbReference type="eggNOG" id="COG0373">
    <property type="taxonomic scope" value="Bacteria"/>
</dbReference>
<dbReference type="HOGENOM" id="CLU_035113_2_2_4"/>
<dbReference type="UniPathway" id="UPA00251">
    <property type="reaction ID" value="UER00316"/>
</dbReference>
<dbReference type="Proteomes" id="UP000001027">
    <property type="component" value="Chromosome"/>
</dbReference>
<dbReference type="GO" id="GO:0008883">
    <property type="term" value="F:glutamyl-tRNA reductase activity"/>
    <property type="evidence" value="ECO:0007669"/>
    <property type="project" value="UniProtKB-UniRule"/>
</dbReference>
<dbReference type="GO" id="GO:0050661">
    <property type="term" value="F:NADP binding"/>
    <property type="evidence" value="ECO:0007669"/>
    <property type="project" value="InterPro"/>
</dbReference>
<dbReference type="GO" id="GO:0019353">
    <property type="term" value="P:protoporphyrinogen IX biosynthetic process from glutamate"/>
    <property type="evidence" value="ECO:0007669"/>
    <property type="project" value="TreeGrafter"/>
</dbReference>
<dbReference type="CDD" id="cd05213">
    <property type="entry name" value="NAD_bind_Glutamyl_tRNA_reduct"/>
    <property type="match status" value="1"/>
</dbReference>
<dbReference type="FunFam" id="3.30.460.30:FF:000001">
    <property type="entry name" value="Glutamyl-tRNA reductase"/>
    <property type="match status" value="1"/>
</dbReference>
<dbReference type="FunFam" id="3.40.50.720:FF:000031">
    <property type="entry name" value="Glutamyl-tRNA reductase"/>
    <property type="match status" value="1"/>
</dbReference>
<dbReference type="Gene3D" id="3.30.460.30">
    <property type="entry name" value="Glutamyl-tRNA reductase, N-terminal domain"/>
    <property type="match status" value="1"/>
</dbReference>
<dbReference type="Gene3D" id="3.40.50.720">
    <property type="entry name" value="NAD(P)-binding Rossmann-like Domain"/>
    <property type="match status" value="1"/>
</dbReference>
<dbReference type="HAMAP" id="MF_00087">
    <property type="entry name" value="Glu_tRNA_reductase"/>
    <property type="match status" value="1"/>
</dbReference>
<dbReference type="InterPro" id="IPR000343">
    <property type="entry name" value="4pyrrol_synth_GluRdtase"/>
</dbReference>
<dbReference type="InterPro" id="IPR015896">
    <property type="entry name" value="4pyrrol_synth_GluRdtase_dimer"/>
</dbReference>
<dbReference type="InterPro" id="IPR015895">
    <property type="entry name" value="4pyrrol_synth_GluRdtase_N"/>
</dbReference>
<dbReference type="InterPro" id="IPR018214">
    <property type="entry name" value="GluRdtase_CS"/>
</dbReference>
<dbReference type="InterPro" id="IPR036453">
    <property type="entry name" value="GluRdtase_dimer_dom_sf"/>
</dbReference>
<dbReference type="InterPro" id="IPR036343">
    <property type="entry name" value="GluRdtase_N_sf"/>
</dbReference>
<dbReference type="InterPro" id="IPR036291">
    <property type="entry name" value="NAD(P)-bd_dom_sf"/>
</dbReference>
<dbReference type="InterPro" id="IPR006151">
    <property type="entry name" value="Shikm_DH/Glu-tRNA_Rdtase"/>
</dbReference>
<dbReference type="NCBIfam" id="TIGR01035">
    <property type="entry name" value="hemA"/>
    <property type="match status" value="1"/>
</dbReference>
<dbReference type="PANTHER" id="PTHR43013">
    <property type="entry name" value="GLUTAMYL-TRNA REDUCTASE"/>
    <property type="match status" value="1"/>
</dbReference>
<dbReference type="PANTHER" id="PTHR43013:SF1">
    <property type="entry name" value="GLUTAMYL-TRNA REDUCTASE"/>
    <property type="match status" value="1"/>
</dbReference>
<dbReference type="Pfam" id="PF00745">
    <property type="entry name" value="GlutR_dimer"/>
    <property type="match status" value="1"/>
</dbReference>
<dbReference type="Pfam" id="PF05201">
    <property type="entry name" value="GlutR_N"/>
    <property type="match status" value="1"/>
</dbReference>
<dbReference type="Pfam" id="PF01488">
    <property type="entry name" value="Shikimate_DH"/>
    <property type="match status" value="1"/>
</dbReference>
<dbReference type="PIRSF" id="PIRSF000445">
    <property type="entry name" value="4pyrrol_synth_GluRdtase"/>
    <property type="match status" value="1"/>
</dbReference>
<dbReference type="SUPFAM" id="SSF69742">
    <property type="entry name" value="Glutamyl tRNA-reductase catalytic, N-terminal domain"/>
    <property type="match status" value="1"/>
</dbReference>
<dbReference type="SUPFAM" id="SSF69075">
    <property type="entry name" value="Glutamyl tRNA-reductase dimerization domain"/>
    <property type="match status" value="1"/>
</dbReference>
<dbReference type="SUPFAM" id="SSF51735">
    <property type="entry name" value="NAD(P)-binding Rossmann-fold domains"/>
    <property type="match status" value="1"/>
</dbReference>
<dbReference type="PROSITE" id="PS00747">
    <property type="entry name" value="GLUTR"/>
    <property type="match status" value="1"/>
</dbReference>
<feature type="chain" id="PRO_0000113997" description="Glutamyl-tRNA reductase">
    <location>
        <begin position="1"/>
        <end position="424"/>
    </location>
</feature>
<feature type="active site" description="Nucleophile" evidence="1">
    <location>
        <position position="54"/>
    </location>
</feature>
<feature type="binding site" evidence="1">
    <location>
        <begin position="53"/>
        <end position="56"/>
    </location>
    <ligand>
        <name>substrate</name>
    </ligand>
</feature>
<feature type="binding site" evidence="1">
    <location>
        <position position="111"/>
    </location>
    <ligand>
        <name>substrate</name>
    </ligand>
</feature>
<feature type="binding site" evidence="1">
    <location>
        <begin position="116"/>
        <end position="118"/>
    </location>
    <ligand>
        <name>substrate</name>
    </ligand>
</feature>
<feature type="binding site" evidence="1">
    <location>
        <position position="122"/>
    </location>
    <ligand>
        <name>substrate</name>
    </ligand>
</feature>
<feature type="binding site" evidence="1">
    <location>
        <begin position="191"/>
        <end position="196"/>
    </location>
    <ligand>
        <name>NADP(+)</name>
        <dbReference type="ChEBI" id="CHEBI:58349"/>
    </ligand>
</feature>
<feature type="site" description="Important for activity" evidence="1">
    <location>
        <position position="101"/>
    </location>
</feature>
<reference key="1">
    <citation type="journal article" date="2003" name="Nat. Genet.">
        <title>Comparative analysis of the genome sequences of Bordetella pertussis, Bordetella parapertussis and Bordetella bronchiseptica.</title>
        <authorList>
            <person name="Parkhill J."/>
            <person name="Sebaihia M."/>
            <person name="Preston A."/>
            <person name="Murphy L.D."/>
            <person name="Thomson N.R."/>
            <person name="Harris D.E."/>
            <person name="Holden M.T.G."/>
            <person name="Churcher C.M."/>
            <person name="Bentley S.D."/>
            <person name="Mungall K.L."/>
            <person name="Cerdeno-Tarraga A.-M."/>
            <person name="Temple L."/>
            <person name="James K.D."/>
            <person name="Harris B."/>
            <person name="Quail M.A."/>
            <person name="Achtman M."/>
            <person name="Atkin R."/>
            <person name="Baker S."/>
            <person name="Basham D."/>
            <person name="Bason N."/>
            <person name="Cherevach I."/>
            <person name="Chillingworth T."/>
            <person name="Collins M."/>
            <person name="Cronin A."/>
            <person name="Davis P."/>
            <person name="Doggett J."/>
            <person name="Feltwell T."/>
            <person name="Goble A."/>
            <person name="Hamlin N."/>
            <person name="Hauser H."/>
            <person name="Holroyd S."/>
            <person name="Jagels K."/>
            <person name="Leather S."/>
            <person name="Moule S."/>
            <person name="Norberczak H."/>
            <person name="O'Neil S."/>
            <person name="Ormond D."/>
            <person name="Price C."/>
            <person name="Rabbinowitsch E."/>
            <person name="Rutter S."/>
            <person name="Sanders M."/>
            <person name="Saunders D."/>
            <person name="Seeger K."/>
            <person name="Sharp S."/>
            <person name="Simmonds M."/>
            <person name="Skelton J."/>
            <person name="Squares R."/>
            <person name="Squares S."/>
            <person name="Stevens K."/>
            <person name="Unwin L."/>
            <person name="Whitehead S."/>
            <person name="Barrell B.G."/>
            <person name="Maskell D.J."/>
        </authorList>
    </citation>
    <scope>NUCLEOTIDE SEQUENCE [LARGE SCALE GENOMIC DNA]</scope>
    <source>
        <strain>ATCC BAA-588 / NCTC 13252 / RB50</strain>
    </source>
</reference>
<gene>
    <name evidence="1" type="primary">hemA</name>
    <name type="ordered locus">BB0383</name>
</gene>
<proteinExistence type="inferred from homology"/>
<accession>Q7WQF0</accession>
<protein>
    <recommendedName>
        <fullName evidence="1">Glutamyl-tRNA reductase</fullName>
        <shortName evidence="1">GluTR</shortName>
        <ecNumber evidence="1">1.2.1.70</ecNumber>
    </recommendedName>
</protein>
<comment type="function">
    <text evidence="1">Catalyzes the NADPH-dependent reduction of glutamyl-tRNA(Glu) to glutamate 1-semialdehyde (GSA).</text>
</comment>
<comment type="catalytic activity">
    <reaction evidence="1">
        <text>(S)-4-amino-5-oxopentanoate + tRNA(Glu) + NADP(+) = L-glutamyl-tRNA(Glu) + NADPH + H(+)</text>
        <dbReference type="Rhea" id="RHEA:12344"/>
        <dbReference type="Rhea" id="RHEA-COMP:9663"/>
        <dbReference type="Rhea" id="RHEA-COMP:9680"/>
        <dbReference type="ChEBI" id="CHEBI:15378"/>
        <dbReference type="ChEBI" id="CHEBI:57501"/>
        <dbReference type="ChEBI" id="CHEBI:57783"/>
        <dbReference type="ChEBI" id="CHEBI:58349"/>
        <dbReference type="ChEBI" id="CHEBI:78442"/>
        <dbReference type="ChEBI" id="CHEBI:78520"/>
        <dbReference type="EC" id="1.2.1.70"/>
    </reaction>
</comment>
<comment type="pathway">
    <text evidence="1">Porphyrin-containing compound metabolism; protoporphyrin-IX biosynthesis; 5-aminolevulinate from L-glutamyl-tRNA(Glu): step 1/2.</text>
</comment>
<comment type="subunit">
    <text evidence="1">Homodimer.</text>
</comment>
<comment type="domain">
    <text evidence="1">Possesses an unusual extended V-shaped dimeric structure with each monomer consisting of three distinct domains arranged along a curved 'spinal' alpha-helix. The N-terminal catalytic domain specifically recognizes the glutamate moiety of the substrate. The second domain is the NADPH-binding domain, and the third C-terminal domain is responsible for dimerization.</text>
</comment>
<comment type="miscellaneous">
    <text evidence="1">During catalysis, the active site Cys acts as a nucleophile attacking the alpha-carbonyl group of tRNA-bound glutamate with the formation of a thioester intermediate between enzyme and glutamate, and the concomitant release of tRNA(Glu). The thioester intermediate is finally reduced by direct hydride transfer from NADPH, to form the product GSA.</text>
</comment>
<comment type="similarity">
    <text evidence="1">Belongs to the glutamyl-tRNA reductase family.</text>
</comment>
<name>HEM1_BORBR</name>
<keyword id="KW-0521">NADP</keyword>
<keyword id="KW-0560">Oxidoreductase</keyword>
<keyword id="KW-0627">Porphyrin biosynthesis</keyword>